<comment type="function">
    <text evidence="1">Plays critical roles in virus replication, from virus entry and uncoating to assembly and budding of the virus particle. M1 binding to ribonucleocapsids (RNPs) in nucleus seems to inhibit viral transcription. Interaction of viral NEP with M1-RNP is thought to promote nuclear export of the complex, which is targeted to the virion assembly site at the apical plasma membrane in polarized epithelial cells. Interactions with NA and HA may bring M1, a non-raft-associated protein, into lipid rafts. Forms a continuous shell on the inner side of the lipid bilayer in virion, where it binds the RNP. During virus entry into cell, the M2 ion channel acidifies the internal virion core, inducing M1 dissociation from the RNP. M1-free RNPs are transported to the nucleus, where viral transcription and replication can take place.</text>
</comment>
<comment type="function">
    <text evidence="1">Determines the virion's shape: spherical or filamentous. Clinical isolates of influenza are characterized by the presence of significant proportion of filamentous virions, whereas after multiple passage on eggs or cell culture, virions have only spherical morphology. Filamentous virions are thought to be important to infect neighboring cells, and spherical virions more suited to spread through aerosol between hosts organisms.</text>
</comment>
<comment type="subunit">
    <text evidence="1">Homodimer and homomultimer. Interacts with NEP. Binds ribonucleocapsid by both interacting with genomic RNA and NP protein. May interact with HA and NA. Cannot bind NP without genomic RNA.</text>
</comment>
<comment type="subcellular location">
    <subcellularLocation>
        <location evidence="1">Virion membrane</location>
        <topology evidence="1">Peripheral membrane protein</topology>
        <orientation evidence="1">Cytoplasmic side</orientation>
    </subcellularLocation>
    <subcellularLocation>
        <location evidence="1">Host nucleus</location>
    </subcellularLocation>
</comment>
<comment type="alternative products">
    <event type="alternative splicing"/>
    <isoform>
        <id>Q67202-1</id>
        <name>M1</name>
        <sequence type="displayed"/>
    </isoform>
    <isoform>
        <id>Q67201-1</id>
        <name>M2</name>
        <sequence type="external"/>
    </isoform>
    <text>Only the first 9 residues are shared by the 2 isoforms.</text>
</comment>
<comment type="miscellaneous">
    <text evidence="1">Most abundant protein in virion. When expressed alone can form virus-like particles in transfected cells.</text>
</comment>
<comment type="similarity">
    <text evidence="1">Belongs to the influenza viruses Matrix protein M1 family.</text>
</comment>
<gene>
    <name evidence="1" type="primary">M</name>
</gene>
<proteinExistence type="inferred from homology"/>
<organismHost>
    <name type="scientific">Aves</name>
    <dbReference type="NCBI Taxonomy" id="8782"/>
</organismHost>
<organismHost>
    <name type="scientific">Homo sapiens</name>
    <name type="common">Human</name>
    <dbReference type="NCBI Taxonomy" id="9606"/>
</organismHost>
<organismHost>
    <name type="scientific">Sus scrofa</name>
    <name type="common">Pig</name>
    <dbReference type="NCBI Taxonomy" id="9823"/>
</organismHost>
<protein>
    <recommendedName>
        <fullName evidence="1">Matrix protein 1</fullName>
        <shortName evidence="1">M1</shortName>
    </recommendedName>
</protein>
<feature type="chain" id="PRO_0000326324" description="Matrix protein 1">
    <location>
        <begin position="1"/>
        <end position="252"/>
    </location>
</feature>
<feature type="region of interest" description="Membrane-binding" evidence="1">
    <location>
        <begin position="1"/>
        <end position="164"/>
    </location>
</feature>
<feature type="region of interest" description="RNP-binding" evidence="1">
    <location>
        <begin position="165"/>
        <end position="252"/>
    </location>
</feature>
<feature type="short sequence motif" description="Nuclear localization signal" evidence="1">
    <location>
        <begin position="101"/>
        <end position="105"/>
    </location>
</feature>
<dbReference type="EMBL" id="M63525">
    <property type="protein sequence ID" value="AAA43336.1"/>
    <property type="molecule type" value="Genomic_RNA"/>
</dbReference>
<dbReference type="SMR" id="Q67202"/>
<dbReference type="GO" id="GO:0042025">
    <property type="term" value="C:host cell nucleus"/>
    <property type="evidence" value="ECO:0007669"/>
    <property type="project" value="UniProtKB-SubCell"/>
</dbReference>
<dbReference type="GO" id="GO:0016020">
    <property type="term" value="C:membrane"/>
    <property type="evidence" value="ECO:0007669"/>
    <property type="project" value="UniProtKB-KW"/>
</dbReference>
<dbReference type="GO" id="GO:0055036">
    <property type="term" value="C:virion membrane"/>
    <property type="evidence" value="ECO:0007669"/>
    <property type="project" value="UniProtKB-SubCell"/>
</dbReference>
<dbReference type="GO" id="GO:0003723">
    <property type="term" value="F:RNA binding"/>
    <property type="evidence" value="ECO:0007669"/>
    <property type="project" value="UniProtKB-UniRule"/>
</dbReference>
<dbReference type="GO" id="GO:0039660">
    <property type="term" value="F:structural constituent of virion"/>
    <property type="evidence" value="ECO:0007669"/>
    <property type="project" value="UniProtKB-UniRule"/>
</dbReference>
<dbReference type="GO" id="GO:0046761">
    <property type="term" value="P:viral budding from plasma membrane"/>
    <property type="evidence" value="ECO:0007669"/>
    <property type="project" value="UniProtKB-UniRule"/>
</dbReference>
<dbReference type="FunFam" id="1.10.10.180:FF:000001">
    <property type="entry name" value="Matrix protein 1"/>
    <property type="match status" value="1"/>
</dbReference>
<dbReference type="FunFam" id="1.20.91.10:FF:000001">
    <property type="entry name" value="Matrix protein 1"/>
    <property type="match status" value="1"/>
</dbReference>
<dbReference type="Gene3D" id="1.10.10.180">
    <property type="match status" value="1"/>
</dbReference>
<dbReference type="Gene3D" id="1.20.91.10">
    <property type="match status" value="1"/>
</dbReference>
<dbReference type="HAMAP" id="MF_04068">
    <property type="entry name" value="INFV_M1"/>
    <property type="match status" value="1"/>
</dbReference>
<dbReference type="InterPro" id="IPR036039">
    <property type="entry name" value="Flu_matrix_M1"/>
</dbReference>
<dbReference type="InterPro" id="IPR013188">
    <property type="entry name" value="Flu_matrix_M1_C"/>
</dbReference>
<dbReference type="InterPro" id="IPR001561">
    <property type="entry name" value="Flu_matrix_M1_N"/>
</dbReference>
<dbReference type="InterPro" id="IPR015423">
    <property type="entry name" value="Flu_matrix_M1_N_sub1"/>
</dbReference>
<dbReference type="InterPro" id="IPR015799">
    <property type="entry name" value="Flu_matrix_M1_N_sub2"/>
</dbReference>
<dbReference type="InterPro" id="IPR037533">
    <property type="entry name" value="INFV_M1"/>
</dbReference>
<dbReference type="Pfam" id="PF00598">
    <property type="entry name" value="Flu_M1"/>
    <property type="match status" value="1"/>
</dbReference>
<dbReference type="Pfam" id="PF08289">
    <property type="entry name" value="Flu_M1_C"/>
    <property type="match status" value="1"/>
</dbReference>
<dbReference type="SMART" id="SM00759">
    <property type="entry name" value="Flu_M1_C"/>
    <property type="match status" value="1"/>
</dbReference>
<dbReference type="SUPFAM" id="SSF48145">
    <property type="entry name" value="Influenza virus matrix protein M1"/>
    <property type="match status" value="1"/>
</dbReference>
<name>M1_I85A4</name>
<accession>Q67202</accession>
<evidence type="ECO:0000255" key="1">
    <source>
        <dbReference type="HAMAP-Rule" id="MF_04068"/>
    </source>
</evidence>
<sequence length="252" mass="27915">MSLLTEVETYVLSIIPSGPLKAEIAQRLEDVFAGKNTDLEALMEWLKTRPILSPLTKGILGFVFTLTVPSERGLQRRRFVQNALNGNGDPNNMDRAVKLYRKLKREITFHGAKEVALSYSTGALASCMGLIYNRMGTVTTEVAFGLVCATCEQIADSQHRSHRQMVTTTNPLIRHENRMVLASTTAKAMEQMAGSSEQAAEAMEVASQARQMVHAMRTIGTHPSSSAGLKDDLLENLQAYQKRMGVQIQRFK</sequence>
<reference key="1">
    <citation type="journal article" date="1991" name="J. Virol.">
        <title>Evolutionary analysis of the influenza A virus M gene with comparison of the M1 and M2 proteins.</title>
        <authorList>
            <person name="Ito T."/>
            <person name="Gorman O.T."/>
            <person name="Kawaoka Y."/>
            <person name="Bean W.J."/>
            <person name="Webster R.G."/>
        </authorList>
    </citation>
    <scope>NUCLEOTIDE SEQUENCE [GENOMIC RNA]</scope>
</reference>
<keyword id="KW-0025">Alternative splicing</keyword>
<keyword id="KW-1048">Host nucleus</keyword>
<keyword id="KW-0472">Membrane</keyword>
<keyword id="KW-0694">RNA-binding</keyword>
<keyword id="KW-0468">Viral matrix protein</keyword>
<keyword id="KW-0946">Virion</keyword>
<organism>
    <name type="scientific">Influenza A virus (strain A/Swine/Netherlands/12/1985 H1N1)</name>
    <dbReference type="NCBI Taxonomy" id="380347"/>
    <lineage>
        <taxon>Viruses</taxon>
        <taxon>Riboviria</taxon>
        <taxon>Orthornavirae</taxon>
        <taxon>Negarnaviricota</taxon>
        <taxon>Polyploviricotina</taxon>
        <taxon>Insthoviricetes</taxon>
        <taxon>Articulavirales</taxon>
        <taxon>Orthomyxoviridae</taxon>
        <taxon>Alphainfluenzavirus</taxon>
        <taxon>Alphainfluenzavirus influenzae</taxon>
        <taxon>Influenza A virus</taxon>
    </lineage>
</organism>